<sequence>MARVTVQDAVEKIGNRFDLVLVAARRARQMQSGGKDALVPEENDKPTVIALREIEEGLITKDVLDARERQEQQEQEAAELAAVSSIMHNR</sequence>
<proteinExistence type="inferred from homology"/>
<accession>C3LSD6</accession>
<gene>
    <name evidence="1" type="primary">rpoZ</name>
    <name type="ordered locus">VCM66_2629</name>
</gene>
<feature type="chain" id="PRO_1000133760" description="DNA-directed RNA polymerase subunit omega">
    <location>
        <begin position="1"/>
        <end position="90"/>
    </location>
</feature>
<feature type="region of interest" description="Disordered" evidence="2">
    <location>
        <begin position="70"/>
        <end position="90"/>
    </location>
</feature>
<protein>
    <recommendedName>
        <fullName evidence="1">DNA-directed RNA polymerase subunit omega</fullName>
        <shortName evidence="1">RNAP omega subunit</shortName>
        <ecNumber evidence="1">2.7.7.6</ecNumber>
    </recommendedName>
    <alternativeName>
        <fullName evidence="1">RNA polymerase omega subunit</fullName>
    </alternativeName>
    <alternativeName>
        <fullName evidence="1">Transcriptase subunit omega</fullName>
    </alternativeName>
</protein>
<comment type="function">
    <text evidence="1">Promotes RNA polymerase assembly. Latches the N- and C-terminal regions of the beta' subunit thereby facilitating its interaction with the beta and alpha subunits.</text>
</comment>
<comment type="catalytic activity">
    <reaction evidence="1">
        <text>RNA(n) + a ribonucleoside 5'-triphosphate = RNA(n+1) + diphosphate</text>
        <dbReference type="Rhea" id="RHEA:21248"/>
        <dbReference type="Rhea" id="RHEA-COMP:14527"/>
        <dbReference type="Rhea" id="RHEA-COMP:17342"/>
        <dbReference type="ChEBI" id="CHEBI:33019"/>
        <dbReference type="ChEBI" id="CHEBI:61557"/>
        <dbReference type="ChEBI" id="CHEBI:140395"/>
        <dbReference type="EC" id="2.7.7.6"/>
    </reaction>
</comment>
<comment type="subunit">
    <text evidence="1">The RNAP catalytic core consists of 2 alpha, 1 beta, 1 beta' and 1 omega subunit. When a sigma factor is associated with the core the holoenzyme is formed, which can initiate transcription.</text>
</comment>
<comment type="similarity">
    <text evidence="1">Belongs to the RNA polymerase subunit omega family.</text>
</comment>
<reference key="1">
    <citation type="journal article" date="2008" name="PLoS ONE">
        <title>A recalibrated molecular clock and independent origins for the cholera pandemic clones.</title>
        <authorList>
            <person name="Feng L."/>
            <person name="Reeves P.R."/>
            <person name="Lan R."/>
            <person name="Ren Y."/>
            <person name="Gao C."/>
            <person name="Zhou Z."/>
            <person name="Ren Y."/>
            <person name="Cheng J."/>
            <person name="Wang W."/>
            <person name="Wang J."/>
            <person name="Qian W."/>
            <person name="Li D."/>
            <person name="Wang L."/>
        </authorList>
    </citation>
    <scope>NUCLEOTIDE SEQUENCE [LARGE SCALE GENOMIC DNA]</scope>
    <source>
        <strain>M66-2</strain>
    </source>
</reference>
<organism>
    <name type="scientific">Vibrio cholerae serotype O1 (strain M66-2)</name>
    <dbReference type="NCBI Taxonomy" id="579112"/>
    <lineage>
        <taxon>Bacteria</taxon>
        <taxon>Pseudomonadati</taxon>
        <taxon>Pseudomonadota</taxon>
        <taxon>Gammaproteobacteria</taxon>
        <taxon>Vibrionales</taxon>
        <taxon>Vibrionaceae</taxon>
        <taxon>Vibrio</taxon>
    </lineage>
</organism>
<name>RPOZ_VIBCM</name>
<dbReference type="EC" id="2.7.7.6" evidence="1"/>
<dbReference type="EMBL" id="CP001233">
    <property type="protein sequence ID" value="ACP06923.1"/>
    <property type="molecule type" value="Genomic_DNA"/>
</dbReference>
<dbReference type="RefSeq" id="WP_000135052.1">
    <property type="nucleotide sequence ID" value="NC_012578.1"/>
</dbReference>
<dbReference type="SMR" id="C3LSD6"/>
<dbReference type="GeneID" id="94012648"/>
<dbReference type="KEGG" id="vcm:VCM66_2629"/>
<dbReference type="HOGENOM" id="CLU_125406_5_3_6"/>
<dbReference type="Proteomes" id="UP000001217">
    <property type="component" value="Chromosome I"/>
</dbReference>
<dbReference type="GO" id="GO:0000428">
    <property type="term" value="C:DNA-directed RNA polymerase complex"/>
    <property type="evidence" value="ECO:0007669"/>
    <property type="project" value="UniProtKB-KW"/>
</dbReference>
<dbReference type="GO" id="GO:0003677">
    <property type="term" value="F:DNA binding"/>
    <property type="evidence" value="ECO:0007669"/>
    <property type="project" value="UniProtKB-UniRule"/>
</dbReference>
<dbReference type="GO" id="GO:0003899">
    <property type="term" value="F:DNA-directed RNA polymerase activity"/>
    <property type="evidence" value="ECO:0007669"/>
    <property type="project" value="UniProtKB-UniRule"/>
</dbReference>
<dbReference type="GO" id="GO:0006351">
    <property type="term" value="P:DNA-templated transcription"/>
    <property type="evidence" value="ECO:0007669"/>
    <property type="project" value="UniProtKB-UniRule"/>
</dbReference>
<dbReference type="FunFam" id="3.90.940.10:FF:000001">
    <property type="entry name" value="DNA-directed RNA polymerase subunit omega"/>
    <property type="match status" value="1"/>
</dbReference>
<dbReference type="Gene3D" id="3.90.940.10">
    <property type="match status" value="1"/>
</dbReference>
<dbReference type="HAMAP" id="MF_00366">
    <property type="entry name" value="RNApol_bact_RpoZ"/>
    <property type="match status" value="1"/>
</dbReference>
<dbReference type="InterPro" id="IPR003716">
    <property type="entry name" value="DNA-dir_RNA_pol_omega"/>
</dbReference>
<dbReference type="InterPro" id="IPR006110">
    <property type="entry name" value="Pol_omega/Rpo6/RPB6"/>
</dbReference>
<dbReference type="InterPro" id="IPR036161">
    <property type="entry name" value="RPB6/omega-like_sf"/>
</dbReference>
<dbReference type="NCBIfam" id="TIGR00690">
    <property type="entry name" value="rpoZ"/>
    <property type="match status" value="1"/>
</dbReference>
<dbReference type="PANTHER" id="PTHR34476">
    <property type="entry name" value="DNA-DIRECTED RNA POLYMERASE SUBUNIT OMEGA"/>
    <property type="match status" value="1"/>
</dbReference>
<dbReference type="PANTHER" id="PTHR34476:SF1">
    <property type="entry name" value="DNA-DIRECTED RNA POLYMERASE SUBUNIT OMEGA"/>
    <property type="match status" value="1"/>
</dbReference>
<dbReference type="Pfam" id="PF01192">
    <property type="entry name" value="RNA_pol_Rpb6"/>
    <property type="match status" value="1"/>
</dbReference>
<dbReference type="SMART" id="SM01409">
    <property type="entry name" value="RNA_pol_Rpb6"/>
    <property type="match status" value="1"/>
</dbReference>
<dbReference type="SUPFAM" id="SSF63562">
    <property type="entry name" value="RPB6/omega subunit-like"/>
    <property type="match status" value="1"/>
</dbReference>
<keyword id="KW-0240">DNA-directed RNA polymerase</keyword>
<keyword id="KW-0548">Nucleotidyltransferase</keyword>
<keyword id="KW-0804">Transcription</keyword>
<keyword id="KW-0808">Transferase</keyword>
<evidence type="ECO:0000255" key="1">
    <source>
        <dbReference type="HAMAP-Rule" id="MF_00366"/>
    </source>
</evidence>
<evidence type="ECO:0000256" key="2">
    <source>
        <dbReference type="SAM" id="MobiDB-lite"/>
    </source>
</evidence>